<keyword id="KW-0143">Chaperone</keyword>
<keyword id="KW-0963">Cytoplasm</keyword>
<keyword id="KW-0238">DNA-binding</keyword>
<keyword id="KW-1185">Reference proteome</keyword>
<accession>Q87VN8</accession>
<dbReference type="EMBL" id="AE016853">
    <property type="protein sequence ID" value="AAO58326.1"/>
    <property type="molecule type" value="Genomic_DNA"/>
</dbReference>
<dbReference type="RefSeq" id="NP_794631.1">
    <property type="nucleotide sequence ID" value="NC_004578.1"/>
</dbReference>
<dbReference type="RefSeq" id="WP_005763092.1">
    <property type="nucleotide sequence ID" value="NC_004578.1"/>
</dbReference>
<dbReference type="SMR" id="Q87VN8"/>
<dbReference type="STRING" id="223283.PSPTO_4897"/>
<dbReference type="GeneID" id="1186580"/>
<dbReference type="KEGG" id="pst:PSPTO_4897"/>
<dbReference type="PATRIC" id="fig|223283.9.peg.5010"/>
<dbReference type="eggNOG" id="COG0484">
    <property type="taxonomic scope" value="Bacteria"/>
</dbReference>
<dbReference type="HOGENOM" id="CLU_017633_0_0_6"/>
<dbReference type="OrthoDB" id="9779889at2"/>
<dbReference type="PhylomeDB" id="Q87VN8"/>
<dbReference type="Proteomes" id="UP000002515">
    <property type="component" value="Chromosome"/>
</dbReference>
<dbReference type="GO" id="GO:0005737">
    <property type="term" value="C:cytoplasm"/>
    <property type="evidence" value="ECO:0007669"/>
    <property type="project" value="UniProtKB-UniRule"/>
</dbReference>
<dbReference type="GO" id="GO:0009295">
    <property type="term" value="C:nucleoid"/>
    <property type="evidence" value="ECO:0007669"/>
    <property type="project" value="UniProtKB-SubCell"/>
</dbReference>
<dbReference type="GO" id="GO:0003681">
    <property type="term" value="F:bent DNA binding"/>
    <property type="evidence" value="ECO:0007669"/>
    <property type="project" value="UniProtKB-UniRule"/>
</dbReference>
<dbReference type="GO" id="GO:0051082">
    <property type="term" value="F:unfolded protein binding"/>
    <property type="evidence" value="ECO:0007669"/>
    <property type="project" value="InterPro"/>
</dbReference>
<dbReference type="GO" id="GO:0051085">
    <property type="term" value="P:chaperone cofactor-dependent protein refolding"/>
    <property type="evidence" value="ECO:0007669"/>
    <property type="project" value="TreeGrafter"/>
</dbReference>
<dbReference type="GO" id="GO:0042026">
    <property type="term" value="P:protein refolding"/>
    <property type="evidence" value="ECO:0007669"/>
    <property type="project" value="TreeGrafter"/>
</dbReference>
<dbReference type="CDD" id="cd06257">
    <property type="entry name" value="DnaJ"/>
    <property type="match status" value="1"/>
</dbReference>
<dbReference type="CDD" id="cd10747">
    <property type="entry name" value="DnaJ_C"/>
    <property type="match status" value="1"/>
</dbReference>
<dbReference type="FunFam" id="2.60.260.20:FF:000008">
    <property type="entry name" value="Curved DNA-binding protein"/>
    <property type="match status" value="1"/>
</dbReference>
<dbReference type="FunFam" id="2.60.260.20:FF:000013">
    <property type="entry name" value="DnaJ subfamily B member 11"/>
    <property type="match status" value="1"/>
</dbReference>
<dbReference type="Gene3D" id="1.10.287.110">
    <property type="entry name" value="DnaJ domain"/>
    <property type="match status" value="1"/>
</dbReference>
<dbReference type="Gene3D" id="1.20.5.460">
    <property type="entry name" value="Single helix bin"/>
    <property type="match status" value="1"/>
</dbReference>
<dbReference type="Gene3D" id="2.60.260.20">
    <property type="entry name" value="Urease metallochaperone UreE, N-terminal domain"/>
    <property type="match status" value="2"/>
</dbReference>
<dbReference type="HAMAP" id="MF_01154">
    <property type="entry name" value="CbpA"/>
    <property type="match status" value="1"/>
</dbReference>
<dbReference type="InterPro" id="IPR023859">
    <property type="entry name" value="DNA-bd_curved-DNA"/>
</dbReference>
<dbReference type="InterPro" id="IPR002939">
    <property type="entry name" value="DnaJ_C"/>
</dbReference>
<dbReference type="InterPro" id="IPR001623">
    <property type="entry name" value="DnaJ_domain"/>
</dbReference>
<dbReference type="InterPro" id="IPR008971">
    <property type="entry name" value="HSP40/DnaJ_pept-bd"/>
</dbReference>
<dbReference type="InterPro" id="IPR036869">
    <property type="entry name" value="J_dom_sf"/>
</dbReference>
<dbReference type="NCBIfam" id="NF007618">
    <property type="entry name" value="PRK10266.1"/>
    <property type="match status" value="1"/>
</dbReference>
<dbReference type="PANTHER" id="PTHR43096">
    <property type="entry name" value="DNAJ HOMOLOG 1, MITOCHONDRIAL-RELATED"/>
    <property type="match status" value="1"/>
</dbReference>
<dbReference type="PANTHER" id="PTHR43096:SF52">
    <property type="entry name" value="DNAJ HOMOLOG 1, MITOCHONDRIAL-RELATED"/>
    <property type="match status" value="1"/>
</dbReference>
<dbReference type="Pfam" id="PF00226">
    <property type="entry name" value="DnaJ"/>
    <property type="match status" value="1"/>
</dbReference>
<dbReference type="Pfam" id="PF01556">
    <property type="entry name" value="DnaJ_C"/>
    <property type="match status" value="1"/>
</dbReference>
<dbReference type="PRINTS" id="PR00625">
    <property type="entry name" value="JDOMAIN"/>
</dbReference>
<dbReference type="SMART" id="SM00271">
    <property type="entry name" value="DnaJ"/>
    <property type="match status" value="1"/>
</dbReference>
<dbReference type="SUPFAM" id="SSF46565">
    <property type="entry name" value="Chaperone J-domain"/>
    <property type="match status" value="1"/>
</dbReference>
<dbReference type="SUPFAM" id="SSF49493">
    <property type="entry name" value="HSP40/DnaJ peptide-binding domain"/>
    <property type="match status" value="2"/>
</dbReference>
<dbReference type="PROSITE" id="PS50076">
    <property type="entry name" value="DNAJ_2"/>
    <property type="match status" value="1"/>
</dbReference>
<feature type="chain" id="PRO_0000169992" description="Curved DNA-binding protein">
    <location>
        <begin position="1"/>
        <end position="314"/>
    </location>
</feature>
<feature type="domain" description="J" evidence="1">
    <location>
        <begin position="5"/>
        <end position="69"/>
    </location>
</feature>
<feature type="region of interest" description="Disordered" evidence="2">
    <location>
        <begin position="73"/>
        <end position="92"/>
    </location>
</feature>
<evidence type="ECO:0000255" key="1">
    <source>
        <dbReference type="HAMAP-Rule" id="MF_01154"/>
    </source>
</evidence>
<evidence type="ECO:0000256" key="2">
    <source>
        <dbReference type="SAM" id="MobiDB-lite"/>
    </source>
</evidence>
<organism>
    <name type="scientific">Pseudomonas syringae pv. tomato (strain ATCC BAA-871 / DC3000)</name>
    <dbReference type="NCBI Taxonomy" id="223283"/>
    <lineage>
        <taxon>Bacteria</taxon>
        <taxon>Pseudomonadati</taxon>
        <taxon>Pseudomonadota</taxon>
        <taxon>Gammaproteobacteria</taxon>
        <taxon>Pseudomonadales</taxon>
        <taxon>Pseudomonadaceae</taxon>
        <taxon>Pseudomonas</taxon>
    </lineage>
</organism>
<reference key="1">
    <citation type="journal article" date="2003" name="Proc. Natl. Acad. Sci. U.S.A.">
        <title>The complete genome sequence of the Arabidopsis and tomato pathogen Pseudomonas syringae pv. tomato DC3000.</title>
        <authorList>
            <person name="Buell C.R."/>
            <person name="Joardar V."/>
            <person name="Lindeberg M."/>
            <person name="Selengut J."/>
            <person name="Paulsen I.T."/>
            <person name="Gwinn M.L."/>
            <person name="Dodson R.J."/>
            <person name="DeBoy R.T."/>
            <person name="Durkin A.S."/>
            <person name="Kolonay J.F."/>
            <person name="Madupu R."/>
            <person name="Daugherty S.C."/>
            <person name="Brinkac L.M."/>
            <person name="Beanan M.J."/>
            <person name="Haft D.H."/>
            <person name="Nelson W.C."/>
            <person name="Davidsen T.M."/>
            <person name="Zafar N."/>
            <person name="Zhou L."/>
            <person name="Liu J."/>
            <person name="Yuan Q."/>
            <person name="Khouri H.M."/>
            <person name="Fedorova N.B."/>
            <person name="Tran B."/>
            <person name="Russell D."/>
            <person name="Berry K.J."/>
            <person name="Utterback T.R."/>
            <person name="Van Aken S.E."/>
            <person name="Feldblyum T.V."/>
            <person name="D'Ascenzo M."/>
            <person name="Deng W.-L."/>
            <person name="Ramos A.R."/>
            <person name="Alfano J.R."/>
            <person name="Cartinhour S."/>
            <person name="Chatterjee A.K."/>
            <person name="Delaney T.P."/>
            <person name="Lazarowitz S.G."/>
            <person name="Martin G.B."/>
            <person name="Schneider D.J."/>
            <person name="Tang X."/>
            <person name="Bender C.L."/>
            <person name="White O."/>
            <person name="Fraser C.M."/>
            <person name="Collmer A."/>
        </authorList>
    </citation>
    <scope>NUCLEOTIDE SEQUENCE [LARGE SCALE GENOMIC DNA]</scope>
    <source>
        <strain>ATCC BAA-871 / DC3000</strain>
    </source>
</reference>
<gene>
    <name evidence="1" type="primary">cbpA</name>
    <name type="ordered locus">PSPTO_4897</name>
</gene>
<protein>
    <recommendedName>
        <fullName evidence="1">Curved DNA-binding protein</fullName>
    </recommendedName>
</protein>
<proteinExistence type="inferred from homology"/>
<name>CBPA_PSESM</name>
<sequence>MDFKDYYKILDVEPAADDKAIKTAYRKLARKYHPDVSKEAGAEDKFKEASEAYEVLSSPEKRAEYDELRKYGRQGRPFQTPPGWQSRAGAGAGGFEETADFSEFFSSIFGGRPQQGGRTRNPGRKGQDVEMELAVFLEETLSGESKQVSFKVPQHSPNGQRMGDITKTLNVKIPAGVVDGERIRLKGQGAPGIGGGANGDLYLIIRLAPHPMFEVEGHDLVITVPLAPWEAALGTKVAVPTLTSRLNLTIRPDSQNGQRLRIKGNGLMNKSGERGDLYAQLKIVMPKQTDEAARALWQKLADSAAFDPRAQWKG</sequence>
<comment type="function">
    <text evidence="1">DNA-binding protein that preferentially recognizes a curved DNA sequence. It is probably a functional analog of DnaJ; displays overlapping activities with DnaJ, but functions under different conditions, probably acting as a molecular chaperone in an adaptive response to environmental stresses other than heat shock. Lacks autonomous chaperone activity; binds native substrates and targets them for recognition by DnaK. Its activity is inhibited by the binding of CbpM.</text>
</comment>
<comment type="subcellular location">
    <subcellularLocation>
        <location evidence="1">Cytoplasm</location>
        <location evidence="1">Nucleoid</location>
    </subcellularLocation>
</comment>